<keyword id="KW-0150">Chloroplast</keyword>
<keyword id="KW-0396">Initiation factor</keyword>
<keyword id="KW-0934">Plastid</keyword>
<keyword id="KW-0648">Protein biosynthesis</keyword>
<keyword id="KW-0694">RNA-binding</keyword>
<keyword id="KW-0699">rRNA-binding</keyword>
<accession>Q32RV0</accession>
<sequence>MRKQNLIEMEGIVTESLPNAMFRVCLDNGCQVLAHISGKIRKNYIRILLGDRVKVELSPYDLTKGRITYRLRTRSPS</sequence>
<geneLocation type="chloroplast"/>
<comment type="function">
    <text evidence="1">One of the essential components for the initiation of protein synthesis. Stabilizes the binding of IF-2 and IF-3 on the 30S subunit to which N-formylmethionyl-tRNA(fMet) subsequently binds. Helps modulate mRNA selection, yielding the 30S pre-initiation complex (PIC). Upon addition of the 50S ribosomal subunit IF-1, IF-2 and IF-3 are released leaving the mature 70S translation initiation complex.</text>
</comment>
<comment type="subunit">
    <text evidence="1">Component of the 30S ribosomal translation pre-initiation complex which assembles on the 30S ribosome in the order IF-2 and IF-3, IF-1 and N-formylmethionyl-tRNA(fMet); mRNA recruitment can occur at any time during PIC assembly.</text>
</comment>
<comment type="subcellular location">
    <subcellularLocation>
        <location evidence="1">Plastid</location>
        <location evidence="1">Chloroplast</location>
    </subcellularLocation>
</comment>
<comment type="similarity">
    <text evidence="1">Belongs to the IF-1 family.</text>
</comment>
<comment type="sequence caution" evidence="2">
    <conflict type="erroneous initiation">
        <sequence resource="EMBL-CDS" id="AAX45696"/>
    </conflict>
    <text>Extended N-terminus.</text>
</comment>
<proteinExistence type="inferred from homology"/>
<gene>
    <name evidence="1" type="primary">infA</name>
</gene>
<organism>
    <name type="scientific">Staurastrum punctulatum</name>
    <name type="common">Green alga</name>
    <name type="synonym">Cosmoastrum punctulatum</name>
    <dbReference type="NCBI Taxonomy" id="102822"/>
    <lineage>
        <taxon>Eukaryota</taxon>
        <taxon>Viridiplantae</taxon>
        <taxon>Streptophyta</taxon>
        <taxon>Zygnematophyceae</taxon>
        <taxon>Zygnematophycidae</taxon>
        <taxon>Desmidiales</taxon>
        <taxon>Desmidiaceae</taxon>
        <taxon>Staurastrum</taxon>
    </lineage>
</organism>
<dbReference type="EMBL" id="AY958085">
    <property type="protein sequence ID" value="AAX45696.1"/>
    <property type="status" value="ALT_INIT"/>
    <property type="molecule type" value="Genomic_DNA"/>
</dbReference>
<dbReference type="RefSeq" id="YP_636426.1">
    <property type="nucleotide sequence ID" value="NC_008116.1"/>
</dbReference>
<dbReference type="SMR" id="Q32RV0"/>
<dbReference type="GeneID" id="4108652"/>
<dbReference type="GO" id="GO:0009507">
    <property type="term" value="C:chloroplast"/>
    <property type="evidence" value="ECO:0007669"/>
    <property type="project" value="UniProtKB-SubCell"/>
</dbReference>
<dbReference type="GO" id="GO:0005829">
    <property type="term" value="C:cytosol"/>
    <property type="evidence" value="ECO:0007669"/>
    <property type="project" value="TreeGrafter"/>
</dbReference>
<dbReference type="GO" id="GO:0043022">
    <property type="term" value="F:ribosome binding"/>
    <property type="evidence" value="ECO:0007669"/>
    <property type="project" value="UniProtKB-UniRule"/>
</dbReference>
<dbReference type="GO" id="GO:0019843">
    <property type="term" value="F:rRNA binding"/>
    <property type="evidence" value="ECO:0007669"/>
    <property type="project" value="UniProtKB-UniRule"/>
</dbReference>
<dbReference type="GO" id="GO:0003743">
    <property type="term" value="F:translation initiation factor activity"/>
    <property type="evidence" value="ECO:0007669"/>
    <property type="project" value="UniProtKB-UniRule"/>
</dbReference>
<dbReference type="CDD" id="cd04451">
    <property type="entry name" value="S1_IF1"/>
    <property type="match status" value="1"/>
</dbReference>
<dbReference type="FunFam" id="2.40.50.140:FF:000002">
    <property type="entry name" value="Translation initiation factor IF-1"/>
    <property type="match status" value="1"/>
</dbReference>
<dbReference type="Gene3D" id="2.40.50.140">
    <property type="entry name" value="Nucleic acid-binding proteins"/>
    <property type="match status" value="1"/>
</dbReference>
<dbReference type="HAMAP" id="MF_00075">
    <property type="entry name" value="IF_1"/>
    <property type="match status" value="1"/>
</dbReference>
<dbReference type="InterPro" id="IPR012340">
    <property type="entry name" value="NA-bd_OB-fold"/>
</dbReference>
<dbReference type="InterPro" id="IPR006196">
    <property type="entry name" value="RNA-binding_domain_S1_IF1"/>
</dbReference>
<dbReference type="InterPro" id="IPR003029">
    <property type="entry name" value="S1_domain"/>
</dbReference>
<dbReference type="InterPro" id="IPR004368">
    <property type="entry name" value="TIF_IF1"/>
</dbReference>
<dbReference type="NCBIfam" id="TIGR00008">
    <property type="entry name" value="infA"/>
    <property type="match status" value="1"/>
</dbReference>
<dbReference type="PANTHER" id="PTHR33370">
    <property type="entry name" value="TRANSLATION INITIATION FACTOR IF-1, CHLOROPLASTIC"/>
    <property type="match status" value="1"/>
</dbReference>
<dbReference type="PANTHER" id="PTHR33370:SF1">
    <property type="entry name" value="TRANSLATION INITIATION FACTOR IF-1, CHLOROPLASTIC"/>
    <property type="match status" value="1"/>
</dbReference>
<dbReference type="Pfam" id="PF01176">
    <property type="entry name" value="eIF-1a"/>
    <property type="match status" value="1"/>
</dbReference>
<dbReference type="SMART" id="SM00316">
    <property type="entry name" value="S1"/>
    <property type="match status" value="1"/>
</dbReference>
<dbReference type="SUPFAM" id="SSF50249">
    <property type="entry name" value="Nucleic acid-binding proteins"/>
    <property type="match status" value="1"/>
</dbReference>
<dbReference type="PROSITE" id="PS50832">
    <property type="entry name" value="S1_IF1_TYPE"/>
    <property type="match status" value="1"/>
</dbReference>
<feature type="chain" id="PRO_0000226953" description="Translation initiation factor IF-1, chloroplastic">
    <location>
        <begin position="1"/>
        <end position="77"/>
    </location>
</feature>
<feature type="domain" description="S1-like" evidence="1">
    <location>
        <begin position="1"/>
        <end position="72"/>
    </location>
</feature>
<evidence type="ECO:0000255" key="1">
    <source>
        <dbReference type="HAMAP-Rule" id="MF_00075"/>
    </source>
</evidence>
<evidence type="ECO:0000305" key="2"/>
<name>IF1C_STAPU</name>
<reference key="1">
    <citation type="journal article" date="2005" name="BMC Biol.">
        <title>The complete chloroplast DNA sequences of the charophycean green algae Staurastrum and Zygnema reveal that the chloroplast genome underwent extensive changes during the evolution of the Zygnematales.</title>
        <authorList>
            <person name="Turmel M."/>
            <person name="Otis C."/>
            <person name="Lemieux C."/>
        </authorList>
    </citation>
    <scope>NUCLEOTIDE SEQUENCE [LARGE SCALE GENOMIC DNA]</scope>
</reference>
<protein>
    <recommendedName>
        <fullName evidence="1">Translation initiation factor IF-1, chloroplastic</fullName>
    </recommendedName>
</protein>